<keyword id="KW-0963">Cytoplasm</keyword>
<keyword id="KW-0488">Methylation</keyword>
<keyword id="KW-0648">Protein biosynthesis</keyword>
<keyword id="KW-1185">Reference proteome</keyword>
<accession>B7LGX2</accession>
<feature type="chain" id="PRO_1000193488" description="Peptide chain release factor 1">
    <location>
        <begin position="1"/>
        <end position="360"/>
    </location>
</feature>
<feature type="region of interest" description="Disordered" evidence="2">
    <location>
        <begin position="284"/>
        <end position="313"/>
    </location>
</feature>
<feature type="modified residue" description="N5-methylglutamine" evidence="1">
    <location>
        <position position="235"/>
    </location>
</feature>
<sequence>MKPSIVAKLEALHERHEEVQALLGDAQTIADQERFRALSREYAQLSDVSRCFTDWQQVQEDIETAQMMLDDPEMREMAQDELREAKEKSEQLEQQLQVLLLPKDPDDERNAFLEVRAGTGGDEAALFAGDLFRMYSRYAEARRWRVEIMSASEGEHGGYKEIIAKISGDGVYGRLKFESGGHRVQRVPATESQGRIHTSACTVAVMPELPDAELPDINPADLRIDTFRSSGAGGQHVNTTDSAIRITHLPTGIVVECQDERSQHKNKAKALSVLGARIHAAEMAKRQQAEASTRRNLLGSGDRSDRNRTYNFPQGRVTDHRINLTLYRLDEVMEGKLDMLIEPIIQEHQADQLAALSEQE</sequence>
<organism>
    <name type="scientific">Escherichia coli (strain 55989 / EAEC)</name>
    <dbReference type="NCBI Taxonomy" id="585055"/>
    <lineage>
        <taxon>Bacteria</taxon>
        <taxon>Pseudomonadati</taxon>
        <taxon>Pseudomonadota</taxon>
        <taxon>Gammaproteobacteria</taxon>
        <taxon>Enterobacterales</taxon>
        <taxon>Enterobacteriaceae</taxon>
        <taxon>Escherichia</taxon>
    </lineage>
</organism>
<comment type="function">
    <text evidence="1">Peptide chain release factor 1 directs the termination of translation in response to the peptide chain termination codons UAG and UAA.</text>
</comment>
<comment type="subcellular location">
    <subcellularLocation>
        <location evidence="1">Cytoplasm</location>
    </subcellularLocation>
</comment>
<comment type="PTM">
    <text evidence="1">Methylated by PrmC. Methylation increases the termination efficiency of RF1.</text>
</comment>
<comment type="similarity">
    <text evidence="1">Belongs to the prokaryotic/mitochondrial release factor family.</text>
</comment>
<name>RF1_ECO55</name>
<protein>
    <recommendedName>
        <fullName evidence="1">Peptide chain release factor 1</fullName>
        <shortName evidence="1">RF-1</shortName>
    </recommendedName>
</protein>
<dbReference type="EMBL" id="CU928145">
    <property type="protein sequence ID" value="CAU97165.1"/>
    <property type="molecule type" value="Genomic_DNA"/>
</dbReference>
<dbReference type="RefSeq" id="WP_000804726.1">
    <property type="nucleotide sequence ID" value="NZ_CP028304.1"/>
</dbReference>
<dbReference type="SMR" id="B7LGX2"/>
<dbReference type="GeneID" id="93775276"/>
<dbReference type="KEGG" id="eck:EC55989_1307"/>
<dbReference type="HOGENOM" id="CLU_036856_0_1_6"/>
<dbReference type="Proteomes" id="UP000000746">
    <property type="component" value="Chromosome"/>
</dbReference>
<dbReference type="GO" id="GO:0005737">
    <property type="term" value="C:cytoplasm"/>
    <property type="evidence" value="ECO:0007669"/>
    <property type="project" value="UniProtKB-SubCell"/>
</dbReference>
<dbReference type="GO" id="GO:0016149">
    <property type="term" value="F:translation release factor activity, codon specific"/>
    <property type="evidence" value="ECO:0007669"/>
    <property type="project" value="UniProtKB-UniRule"/>
</dbReference>
<dbReference type="FunFam" id="3.30.160.20:FF:000004">
    <property type="entry name" value="Peptide chain release factor 1"/>
    <property type="match status" value="1"/>
</dbReference>
<dbReference type="FunFam" id="3.30.70.1660:FF:000002">
    <property type="entry name" value="Peptide chain release factor 1"/>
    <property type="match status" value="1"/>
</dbReference>
<dbReference type="FunFam" id="3.30.70.1660:FF:000004">
    <property type="entry name" value="Peptide chain release factor 1"/>
    <property type="match status" value="1"/>
</dbReference>
<dbReference type="Gene3D" id="3.30.160.20">
    <property type="match status" value="1"/>
</dbReference>
<dbReference type="Gene3D" id="3.30.70.1660">
    <property type="match status" value="1"/>
</dbReference>
<dbReference type="Gene3D" id="6.10.140.1950">
    <property type="match status" value="1"/>
</dbReference>
<dbReference type="HAMAP" id="MF_00093">
    <property type="entry name" value="Rel_fac_1"/>
    <property type="match status" value="1"/>
</dbReference>
<dbReference type="InterPro" id="IPR005139">
    <property type="entry name" value="PCRF"/>
</dbReference>
<dbReference type="InterPro" id="IPR000352">
    <property type="entry name" value="Pep_chain_release_fac_I"/>
</dbReference>
<dbReference type="InterPro" id="IPR045853">
    <property type="entry name" value="Pep_chain_release_fac_I_sf"/>
</dbReference>
<dbReference type="InterPro" id="IPR050057">
    <property type="entry name" value="Prokaryotic/Mito_RF"/>
</dbReference>
<dbReference type="InterPro" id="IPR004373">
    <property type="entry name" value="RF-1"/>
</dbReference>
<dbReference type="NCBIfam" id="TIGR00019">
    <property type="entry name" value="prfA"/>
    <property type="match status" value="1"/>
</dbReference>
<dbReference type="NCBIfam" id="NF001859">
    <property type="entry name" value="PRK00591.1"/>
    <property type="match status" value="1"/>
</dbReference>
<dbReference type="PANTHER" id="PTHR43804">
    <property type="entry name" value="LD18447P"/>
    <property type="match status" value="1"/>
</dbReference>
<dbReference type="PANTHER" id="PTHR43804:SF7">
    <property type="entry name" value="LD18447P"/>
    <property type="match status" value="1"/>
</dbReference>
<dbReference type="Pfam" id="PF03462">
    <property type="entry name" value="PCRF"/>
    <property type="match status" value="1"/>
</dbReference>
<dbReference type="Pfam" id="PF00472">
    <property type="entry name" value="RF-1"/>
    <property type="match status" value="1"/>
</dbReference>
<dbReference type="SMART" id="SM00937">
    <property type="entry name" value="PCRF"/>
    <property type="match status" value="1"/>
</dbReference>
<dbReference type="SUPFAM" id="SSF75620">
    <property type="entry name" value="Release factor"/>
    <property type="match status" value="1"/>
</dbReference>
<dbReference type="PROSITE" id="PS00745">
    <property type="entry name" value="RF_PROK_I"/>
    <property type="match status" value="1"/>
</dbReference>
<evidence type="ECO:0000255" key="1">
    <source>
        <dbReference type="HAMAP-Rule" id="MF_00093"/>
    </source>
</evidence>
<evidence type="ECO:0000256" key="2">
    <source>
        <dbReference type="SAM" id="MobiDB-lite"/>
    </source>
</evidence>
<reference key="1">
    <citation type="journal article" date="2009" name="PLoS Genet.">
        <title>Organised genome dynamics in the Escherichia coli species results in highly diverse adaptive paths.</title>
        <authorList>
            <person name="Touchon M."/>
            <person name="Hoede C."/>
            <person name="Tenaillon O."/>
            <person name="Barbe V."/>
            <person name="Baeriswyl S."/>
            <person name="Bidet P."/>
            <person name="Bingen E."/>
            <person name="Bonacorsi S."/>
            <person name="Bouchier C."/>
            <person name="Bouvet O."/>
            <person name="Calteau A."/>
            <person name="Chiapello H."/>
            <person name="Clermont O."/>
            <person name="Cruveiller S."/>
            <person name="Danchin A."/>
            <person name="Diard M."/>
            <person name="Dossat C."/>
            <person name="Karoui M.E."/>
            <person name="Frapy E."/>
            <person name="Garry L."/>
            <person name="Ghigo J.M."/>
            <person name="Gilles A.M."/>
            <person name="Johnson J."/>
            <person name="Le Bouguenec C."/>
            <person name="Lescat M."/>
            <person name="Mangenot S."/>
            <person name="Martinez-Jehanne V."/>
            <person name="Matic I."/>
            <person name="Nassif X."/>
            <person name="Oztas S."/>
            <person name="Petit M.A."/>
            <person name="Pichon C."/>
            <person name="Rouy Z."/>
            <person name="Ruf C.S."/>
            <person name="Schneider D."/>
            <person name="Tourret J."/>
            <person name="Vacherie B."/>
            <person name="Vallenet D."/>
            <person name="Medigue C."/>
            <person name="Rocha E.P.C."/>
            <person name="Denamur E."/>
        </authorList>
    </citation>
    <scope>NUCLEOTIDE SEQUENCE [LARGE SCALE GENOMIC DNA]</scope>
    <source>
        <strain>55989 / EAEC</strain>
    </source>
</reference>
<gene>
    <name evidence="1" type="primary">prfA</name>
    <name type="ordered locus">EC55989_1307</name>
</gene>
<proteinExistence type="inferred from homology"/>